<gene>
    <name type="ordered locus">BVU_4062</name>
</gene>
<dbReference type="EC" id="3.1.-.-" evidence="1"/>
<dbReference type="EMBL" id="CP000139">
    <property type="protein sequence ID" value="ABR41664.1"/>
    <property type="molecule type" value="Genomic_DNA"/>
</dbReference>
<dbReference type="SMR" id="A6L7K0"/>
<dbReference type="STRING" id="435590.BVU_4062"/>
<dbReference type="PaxDb" id="435590-BVU_4062"/>
<dbReference type="GeneID" id="5305021"/>
<dbReference type="KEGG" id="bvu:BVU_4062"/>
<dbReference type="eggNOG" id="COG0816">
    <property type="taxonomic scope" value="Bacteria"/>
</dbReference>
<dbReference type="HOGENOM" id="CLU_098240_2_1_10"/>
<dbReference type="BioCyc" id="BVUL435590:G1G59-4201-MONOMER"/>
<dbReference type="Proteomes" id="UP000002861">
    <property type="component" value="Chromosome"/>
</dbReference>
<dbReference type="GO" id="GO:0005829">
    <property type="term" value="C:cytosol"/>
    <property type="evidence" value="ECO:0007669"/>
    <property type="project" value="TreeGrafter"/>
</dbReference>
<dbReference type="GO" id="GO:0004518">
    <property type="term" value="F:nuclease activity"/>
    <property type="evidence" value="ECO:0007669"/>
    <property type="project" value="UniProtKB-KW"/>
</dbReference>
<dbReference type="GO" id="GO:0000967">
    <property type="term" value="P:rRNA 5'-end processing"/>
    <property type="evidence" value="ECO:0007669"/>
    <property type="project" value="UniProtKB-UniRule"/>
</dbReference>
<dbReference type="CDD" id="cd16964">
    <property type="entry name" value="YqgF"/>
    <property type="match status" value="1"/>
</dbReference>
<dbReference type="Gene3D" id="3.30.420.140">
    <property type="entry name" value="YqgF/RNase H-like domain"/>
    <property type="match status" value="1"/>
</dbReference>
<dbReference type="HAMAP" id="MF_00651">
    <property type="entry name" value="Nuclease_YqgF"/>
    <property type="match status" value="1"/>
</dbReference>
<dbReference type="InterPro" id="IPR012337">
    <property type="entry name" value="RNaseH-like_sf"/>
</dbReference>
<dbReference type="InterPro" id="IPR005227">
    <property type="entry name" value="YqgF"/>
</dbReference>
<dbReference type="InterPro" id="IPR006641">
    <property type="entry name" value="YqgF/RNaseH-like_dom"/>
</dbReference>
<dbReference type="InterPro" id="IPR037027">
    <property type="entry name" value="YqgF/RNaseH-like_dom_sf"/>
</dbReference>
<dbReference type="NCBIfam" id="TIGR00250">
    <property type="entry name" value="RNAse_H_YqgF"/>
    <property type="match status" value="1"/>
</dbReference>
<dbReference type="PANTHER" id="PTHR33317">
    <property type="entry name" value="POLYNUCLEOTIDYL TRANSFERASE, RIBONUCLEASE H-LIKE SUPERFAMILY PROTEIN"/>
    <property type="match status" value="1"/>
</dbReference>
<dbReference type="PANTHER" id="PTHR33317:SF4">
    <property type="entry name" value="POLYNUCLEOTIDYL TRANSFERASE, RIBONUCLEASE H-LIKE SUPERFAMILY PROTEIN"/>
    <property type="match status" value="1"/>
</dbReference>
<dbReference type="Pfam" id="PF03652">
    <property type="entry name" value="RuvX"/>
    <property type="match status" value="1"/>
</dbReference>
<dbReference type="SMART" id="SM00732">
    <property type="entry name" value="YqgFc"/>
    <property type="match status" value="1"/>
</dbReference>
<dbReference type="SUPFAM" id="SSF53098">
    <property type="entry name" value="Ribonuclease H-like"/>
    <property type="match status" value="1"/>
</dbReference>
<name>YQGF_PHOV8</name>
<feature type="chain" id="PRO_1000061485" description="Putative pre-16S rRNA nuclease">
    <location>
        <begin position="1"/>
        <end position="139"/>
    </location>
</feature>
<sequence>MSRILAIDYGKKRTGVAVTDVLQIIANGLTTVPTHQLLDFILKYVEKEPVERIIVGHPKQMNNQESENMRNIVPFVNQLRKKIPDIPVEFVDERFTSVLAHQAMLDGGLKKKDRQNKALVDEISATIILQSYLESKKYI</sequence>
<keyword id="KW-0963">Cytoplasm</keyword>
<keyword id="KW-0378">Hydrolase</keyword>
<keyword id="KW-0540">Nuclease</keyword>
<keyword id="KW-0690">Ribosome biogenesis</keyword>
<reference key="1">
    <citation type="journal article" date="2007" name="PLoS Biol.">
        <title>Evolution of symbiotic bacteria in the distal human intestine.</title>
        <authorList>
            <person name="Xu J."/>
            <person name="Mahowald M.A."/>
            <person name="Ley R.E."/>
            <person name="Lozupone C.A."/>
            <person name="Hamady M."/>
            <person name="Martens E.C."/>
            <person name="Henrissat B."/>
            <person name="Coutinho P.M."/>
            <person name="Minx P."/>
            <person name="Latreille P."/>
            <person name="Cordum H."/>
            <person name="Van Brunt A."/>
            <person name="Kim K."/>
            <person name="Fulton R.S."/>
            <person name="Fulton L.A."/>
            <person name="Clifton S.W."/>
            <person name="Wilson R.K."/>
            <person name="Knight R.D."/>
            <person name="Gordon J.I."/>
        </authorList>
    </citation>
    <scope>NUCLEOTIDE SEQUENCE [LARGE SCALE GENOMIC DNA]</scope>
    <source>
        <strain>ATCC 8482 / DSM 1447 / JCM 5826 / CCUG 4940 / NBRC 14291 / NCTC 11154</strain>
    </source>
</reference>
<protein>
    <recommendedName>
        <fullName evidence="1">Putative pre-16S rRNA nuclease</fullName>
        <ecNumber evidence="1">3.1.-.-</ecNumber>
    </recommendedName>
</protein>
<comment type="function">
    <text evidence="1">Could be a nuclease involved in processing of the 5'-end of pre-16S rRNA.</text>
</comment>
<comment type="subcellular location">
    <subcellularLocation>
        <location evidence="1">Cytoplasm</location>
    </subcellularLocation>
</comment>
<comment type="similarity">
    <text evidence="1">Belongs to the YqgF nuclease family.</text>
</comment>
<accession>A6L7K0</accession>
<evidence type="ECO:0000255" key="1">
    <source>
        <dbReference type="HAMAP-Rule" id="MF_00651"/>
    </source>
</evidence>
<proteinExistence type="inferred from homology"/>
<organism>
    <name type="scientific">Phocaeicola vulgatus (strain ATCC 8482 / DSM 1447 / JCM 5826 / CCUG 4940 / NBRC 14291 / NCTC 11154)</name>
    <name type="common">Bacteroides vulgatus</name>
    <dbReference type="NCBI Taxonomy" id="435590"/>
    <lineage>
        <taxon>Bacteria</taxon>
        <taxon>Pseudomonadati</taxon>
        <taxon>Bacteroidota</taxon>
        <taxon>Bacteroidia</taxon>
        <taxon>Bacteroidales</taxon>
        <taxon>Bacteroidaceae</taxon>
        <taxon>Phocaeicola</taxon>
    </lineage>
</organism>